<feature type="chain" id="PRO_1000121836" description="Large ribosomal subunit protein uL29">
    <location>
        <begin position="1"/>
        <end position="75"/>
    </location>
</feature>
<comment type="similarity">
    <text evidence="1">Belongs to the universal ribosomal protein uL29 family.</text>
</comment>
<proteinExistence type="inferred from homology"/>
<protein>
    <recommendedName>
        <fullName evidence="1">Large ribosomal subunit protein uL29</fullName>
    </recommendedName>
    <alternativeName>
        <fullName evidence="2">50S ribosomal protein L29</fullName>
    </alternativeName>
</protein>
<keyword id="KW-0687">Ribonucleoprotein</keyword>
<keyword id="KW-0689">Ribosomal protein</keyword>
<name>RL29_UREU1</name>
<accession>B5ZB48</accession>
<dbReference type="EMBL" id="CP001184">
    <property type="protein sequence ID" value="ACI60082.1"/>
    <property type="molecule type" value="Genomic_DNA"/>
</dbReference>
<dbReference type="RefSeq" id="WP_004026203.1">
    <property type="nucleotide sequence ID" value="NC_011374.1"/>
</dbReference>
<dbReference type="SMR" id="B5ZB48"/>
<dbReference type="STRING" id="565575.UUR10_0234"/>
<dbReference type="GeneID" id="93848714"/>
<dbReference type="KEGG" id="uue:UUR10_0234"/>
<dbReference type="eggNOG" id="COG0255">
    <property type="taxonomic scope" value="Bacteria"/>
</dbReference>
<dbReference type="HOGENOM" id="CLU_158491_2_0_14"/>
<dbReference type="OrthoDB" id="9815192at2"/>
<dbReference type="Proteomes" id="UP000002018">
    <property type="component" value="Chromosome"/>
</dbReference>
<dbReference type="GO" id="GO:0022625">
    <property type="term" value="C:cytosolic large ribosomal subunit"/>
    <property type="evidence" value="ECO:0007669"/>
    <property type="project" value="TreeGrafter"/>
</dbReference>
<dbReference type="GO" id="GO:0003735">
    <property type="term" value="F:structural constituent of ribosome"/>
    <property type="evidence" value="ECO:0007669"/>
    <property type="project" value="InterPro"/>
</dbReference>
<dbReference type="GO" id="GO:0006412">
    <property type="term" value="P:translation"/>
    <property type="evidence" value="ECO:0007669"/>
    <property type="project" value="UniProtKB-UniRule"/>
</dbReference>
<dbReference type="CDD" id="cd00427">
    <property type="entry name" value="Ribosomal_L29_HIP"/>
    <property type="match status" value="1"/>
</dbReference>
<dbReference type="Gene3D" id="1.10.287.310">
    <property type="match status" value="1"/>
</dbReference>
<dbReference type="HAMAP" id="MF_00374">
    <property type="entry name" value="Ribosomal_uL29"/>
    <property type="match status" value="1"/>
</dbReference>
<dbReference type="InterPro" id="IPR050063">
    <property type="entry name" value="Ribosomal_protein_uL29"/>
</dbReference>
<dbReference type="InterPro" id="IPR001854">
    <property type="entry name" value="Ribosomal_uL29"/>
</dbReference>
<dbReference type="InterPro" id="IPR018254">
    <property type="entry name" value="Ribosomal_uL29_CS"/>
</dbReference>
<dbReference type="InterPro" id="IPR036049">
    <property type="entry name" value="Ribosomal_uL29_sf"/>
</dbReference>
<dbReference type="NCBIfam" id="TIGR00012">
    <property type="entry name" value="L29"/>
    <property type="match status" value="1"/>
</dbReference>
<dbReference type="PANTHER" id="PTHR10916">
    <property type="entry name" value="60S RIBOSOMAL PROTEIN L35/50S RIBOSOMAL PROTEIN L29"/>
    <property type="match status" value="1"/>
</dbReference>
<dbReference type="PANTHER" id="PTHR10916:SF0">
    <property type="entry name" value="LARGE RIBOSOMAL SUBUNIT PROTEIN UL29C"/>
    <property type="match status" value="1"/>
</dbReference>
<dbReference type="Pfam" id="PF00831">
    <property type="entry name" value="Ribosomal_L29"/>
    <property type="match status" value="1"/>
</dbReference>
<dbReference type="SUPFAM" id="SSF46561">
    <property type="entry name" value="Ribosomal protein L29 (L29p)"/>
    <property type="match status" value="1"/>
</dbReference>
<dbReference type="PROSITE" id="PS00579">
    <property type="entry name" value="RIBOSOMAL_L29"/>
    <property type="match status" value="1"/>
</dbReference>
<sequence>MSSIAQDLRKKDSLELEKIVIELKAKLLELRFAAANGEAEKLHTAKEIRKTIARALTILNERELAEKLNNKEANK</sequence>
<organism>
    <name type="scientific">Ureaplasma urealyticum serovar 10 (strain ATCC 33699 / Western)</name>
    <dbReference type="NCBI Taxonomy" id="565575"/>
    <lineage>
        <taxon>Bacteria</taxon>
        <taxon>Bacillati</taxon>
        <taxon>Mycoplasmatota</taxon>
        <taxon>Mycoplasmoidales</taxon>
        <taxon>Mycoplasmoidaceae</taxon>
        <taxon>Ureaplasma</taxon>
    </lineage>
</organism>
<evidence type="ECO:0000255" key="1">
    <source>
        <dbReference type="HAMAP-Rule" id="MF_00374"/>
    </source>
</evidence>
<evidence type="ECO:0000305" key="2"/>
<reference key="1">
    <citation type="submission" date="2008-10" db="EMBL/GenBank/DDBJ databases">
        <title>Genome sequence of Ureaplasma urealyticum serovar 10 ATCC-33699.</title>
        <authorList>
            <person name="Shrivastava S."/>
            <person name="Methe B.A."/>
            <person name="Glass J."/>
            <person name="White K."/>
            <person name="Duffy L.B."/>
        </authorList>
    </citation>
    <scope>NUCLEOTIDE SEQUENCE [LARGE SCALE GENOMIC DNA]</scope>
    <source>
        <strain>ATCC 33699 / Western</strain>
    </source>
</reference>
<gene>
    <name evidence="1" type="primary">rpmC</name>
    <name type="ordered locus">UUR10_0234</name>
</gene>